<gene>
    <name evidence="15" type="primary">Itpr2</name>
</gene>
<evidence type="ECO:0000250" key="1">
    <source>
        <dbReference type="UniProtKB" id="Q14571"/>
    </source>
</evidence>
<evidence type="ECO:0000250" key="2">
    <source>
        <dbReference type="UniProtKB" id="Q14573"/>
    </source>
</evidence>
<evidence type="ECO:0000250" key="3">
    <source>
        <dbReference type="UniProtKB" id="Q8WN96"/>
    </source>
</evidence>
<evidence type="ECO:0000250" key="4">
    <source>
        <dbReference type="UniProtKB" id="Q9Z329"/>
    </source>
</evidence>
<evidence type="ECO:0000255" key="5"/>
<evidence type="ECO:0000255" key="6">
    <source>
        <dbReference type="PROSITE-ProRule" id="PRU00131"/>
    </source>
</evidence>
<evidence type="ECO:0000256" key="7">
    <source>
        <dbReference type="SAM" id="MobiDB-lite"/>
    </source>
</evidence>
<evidence type="ECO:0000269" key="8">
    <source>
    </source>
</evidence>
<evidence type="ECO:0000269" key="9">
    <source>
    </source>
</evidence>
<evidence type="ECO:0000269" key="10">
    <source>
    </source>
</evidence>
<evidence type="ECO:0000269" key="11">
    <source>
    </source>
</evidence>
<evidence type="ECO:0000269" key="12">
    <source>
    </source>
</evidence>
<evidence type="ECO:0000269" key="13">
    <source>
    </source>
</evidence>
<evidence type="ECO:0000305" key="14"/>
<evidence type="ECO:0000312" key="15">
    <source>
        <dbReference type="RGD" id="69649"/>
    </source>
</evidence>
<keyword id="KW-0067">ATP-binding</keyword>
<keyword id="KW-0106">Calcium</keyword>
<keyword id="KW-0107">Calcium channel</keyword>
<keyword id="KW-0109">Calcium transport</keyword>
<keyword id="KW-0968">Cytoplasmic vesicle</keyword>
<keyword id="KW-0256">Endoplasmic reticulum</keyword>
<keyword id="KW-0407">Ion channel</keyword>
<keyword id="KW-0406">Ion transport</keyword>
<keyword id="KW-1071">Ligand-gated ion channel</keyword>
<keyword id="KW-0472">Membrane</keyword>
<keyword id="KW-0479">Metal-binding</keyword>
<keyword id="KW-0547">Nucleotide-binding</keyword>
<keyword id="KW-0597">Phosphoprotein</keyword>
<keyword id="KW-0675">Receptor</keyword>
<keyword id="KW-1185">Reference proteome</keyword>
<keyword id="KW-0677">Repeat</keyword>
<keyword id="KW-0812">Transmembrane</keyword>
<keyword id="KW-1133">Transmembrane helix</keyword>
<keyword id="KW-0813">Transport</keyword>
<keyword id="KW-0862">Zinc</keyword>
<comment type="function">
    <text evidence="4 8 11 12">Inositol 1,4,5-trisphosphate-gated calcium channel that upon inositol 1,4,5-trisphosphate binding transports calcium from the endoplasmic reticulum lumen to cytoplasm (PubMed:10620513, PubMed:1655411, PubMed:23019322). Exists in two states; a long-lived closed state where the channel is essentially 'parked' with only very rare visits to an open state and that ligands facilitate the transition from the 'parked' state into a 'drive' mode represented by periods of bursting activity (By similarity).</text>
</comment>
<comment type="catalytic activity">
    <reaction evidence="8 12">
        <text>Ca(2+)(in) = Ca(2+)(out)</text>
        <dbReference type="Rhea" id="RHEA:29671"/>
        <dbReference type="ChEBI" id="CHEBI:29108"/>
    </reaction>
</comment>
<comment type="activity regulation">
    <text evidence="4 8">Inositol 1,4,5-trisphosphate-gated calcium channel activity is inhibited by CALM1 in a calcium-dependent manner (PubMed:10620513). Inositol 1,4,5-trisphosphate-gated calcium channel activity is increased by cAMP that occurs independently of PKA activation. ATP and cytosolic calcium modulate the open probability (Po) predominantly by facilitating extended 'bursting' activity of the channel (By similarity).</text>
</comment>
<comment type="subunit">
    <text evidence="1 3 9 10 13">Homotetramer (PubMed:12032348). Interacts with CABP1 (PubMed:12032348). Interacts with BOK; regulates ITPR2 expression (PubMed:23884412). Interacts with BCL2L10 (By similarity). Interacts with TRPC4 (PubMed:11163362). Interacts with CHGA and CHGB (By similarity).</text>
</comment>
<comment type="subcellular location">
    <subcellularLocation>
        <location evidence="4">Endoplasmic reticulum membrane</location>
        <topology evidence="5">Multi-pass membrane protein</topology>
    </subcellularLocation>
    <subcellularLocation>
        <location evidence="3">Cytoplasmic vesicle</location>
        <location evidence="3">Secretory vesicle membrane</location>
        <topology evidence="5">Multi-pass membrane protein</topology>
    </subcellularLocation>
    <text evidence="4">Forms clusters on endoplasmic reticulum membrane upon inositol 1,4,5-trisphosphate binding.</text>
</comment>
<comment type="PTM">
    <text evidence="12">Phosphorylation by CaMK2 on Ser-150 significantly decreases the channel open probability.</text>
</comment>
<comment type="PTM">
    <text evidence="4">Phosphorylation by cAMP-dependent PKA on Ser-937 increases calcium release.</text>
</comment>
<comment type="similarity">
    <text evidence="14">Belongs to the InsP3 receptor family.</text>
</comment>
<reference key="1">
    <citation type="journal article" date="1991" name="EMBO J.">
        <title>Structure of a novel InsP3 receptor.</title>
        <authorList>
            <person name="Suedhof T.C."/>
            <person name="Newton C.A."/>
            <person name="Archer B.T. III"/>
            <person name="Ushkaryov Y.A."/>
            <person name="Mignery G.A."/>
        </authorList>
    </citation>
    <scope>NUCLEOTIDE SEQUENCE [MRNA]</scope>
    <scope>FUNCTION</scope>
    <scope>VARIANTS</scope>
    <source>
        <tissue>Brain</tissue>
    </source>
</reference>
<reference key="2">
    <citation type="submission" date="2001-04" db="EMBL/GenBank/DDBJ databases">
        <title>New rat IP3R isoform 2 sequence.</title>
        <authorList>
            <person name="Magnino F."/>
            <person name="Dufour J.-F."/>
        </authorList>
    </citation>
    <scope>NUCLEOTIDE SEQUENCE [MRNA]</scope>
    <source>
        <strain>Sprague-Dawley</strain>
    </source>
</reference>
<reference key="3">
    <citation type="journal article" date="2000" name="Biochem. J.">
        <title>Ca2+-calmodulin inhibits Ca2+ release mediated by type-1, -2 and -3 inositol trisphosphate receptors.</title>
        <authorList>
            <person name="Adkins C.E."/>
            <person name="Morris S.A."/>
            <person name="De Smedt H."/>
            <person name="Sienaert I."/>
            <person name="Toeroek K."/>
            <person name="Taylor C.W."/>
        </authorList>
    </citation>
    <scope>FUNCTION</scope>
    <scope>TRANSPORTER ACTIVITY</scope>
    <scope>ACTIVITY REGULATION</scope>
</reference>
<reference key="4">
    <citation type="journal article" date="2001" name="FEBS Lett.">
        <title>Alternative splice variants of hTrp4 differentially interact with the C-terminal portion of the inositol 1,4,5-trisphosphate receptors.</title>
        <authorList>
            <person name="Mery L."/>
            <person name="Magnino F."/>
            <person name="Schmidt K."/>
            <person name="Krause K.-H."/>
            <person name="Dufour J.-F."/>
        </authorList>
    </citation>
    <scope>INTERACTION WITH TRPC4</scope>
</reference>
<reference key="5">
    <citation type="journal article" date="2002" name="Proc. Natl. Acad. Sci. U.S.A.">
        <title>Identification of a family of calcium sensors as protein ligands of inositol trisphosphate receptor Ca(2+) release channels.</title>
        <authorList>
            <person name="Yang J."/>
            <person name="McBride S."/>
            <person name="Mak D.-O.D."/>
            <person name="Vardi N."/>
            <person name="Palczewski K."/>
            <person name="Haeseleer F."/>
            <person name="Foskett J.K."/>
        </authorList>
    </citation>
    <scope>SUBUNIT</scope>
    <scope>INTERACTION WITH CABP1</scope>
</reference>
<reference key="6">
    <citation type="journal article" date="2012" name="J. Biol. Chem.">
        <title>Modulation of inositol 1,4,5-trisphosphate receptor type 2 channel activity by Ca2+/calmodulin-dependent protein kinase II (CaMKII)-mediated phosphorylation.</title>
        <authorList>
            <person name="Maxwell J.T."/>
            <person name="Natesan S."/>
            <person name="Mignery G.A."/>
        </authorList>
    </citation>
    <scope>PHOSPHORYLATION AT SER-150</scope>
    <scope>FUNCTION</scope>
    <scope>CATALYTIC ACTIVITY</scope>
    <scope>MUTAGENESIS OF SER-150</scope>
</reference>
<reference key="7">
    <citation type="journal article" date="2013" name="J. Biol. Chem.">
        <title>The Bcl-2 protein family member Bok binds to the coupling domain of inositol 1,4,5-trisphosphate receptors and protects them from proteolytic cleavage.</title>
        <authorList>
            <person name="Schulman J.J."/>
            <person name="Wright F.A."/>
            <person name="Kaufmann T."/>
            <person name="Wojcikiewicz R.J."/>
        </authorList>
    </citation>
    <scope>INTERACTION WITH BOK</scope>
</reference>
<proteinExistence type="evidence at protein level"/>
<feature type="chain" id="PRO_0000153926" description="Inositol 1,4,5-trisphosphate-gated calcium channel ITPR2">
    <location>
        <begin position="1"/>
        <end position="2701"/>
    </location>
</feature>
<feature type="topological domain" description="Cytoplasmic" evidence="5">
    <location>
        <begin position="1"/>
        <end position="2227"/>
    </location>
</feature>
<feature type="transmembrane region" description="Helical" evidence="5">
    <location>
        <begin position="2228"/>
        <end position="2248"/>
    </location>
</feature>
<feature type="topological domain" description="Extracellular" evidence="5">
    <location>
        <begin position="2249"/>
        <end position="2260"/>
    </location>
</feature>
<feature type="transmembrane region" description="Helical" evidence="5">
    <location>
        <begin position="2261"/>
        <end position="2281"/>
    </location>
</feature>
<feature type="topological domain" description="Cytoplasmic" evidence="5">
    <location>
        <begin position="2282"/>
        <end position="2284"/>
    </location>
</feature>
<feature type="transmembrane region" description="Helical" evidence="5">
    <location>
        <begin position="2285"/>
        <end position="2305"/>
    </location>
</feature>
<feature type="topological domain" description="Extracellular" evidence="5">
    <location>
        <begin position="2306"/>
        <end position="2307"/>
    </location>
</feature>
<feature type="transmembrane region" description="Helical" evidence="5">
    <location>
        <begin position="2308"/>
        <end position="2328"/>
    </location>
</feature>
<feature type="topological domain" description="Cytoplasmic" evidence="5">
    <location>
        <begin position="2329"/>
        <end position="2351"/>
    </location>
</feature>
<feature type="transmembrane region" description="Helical" evidence="5">
    <location>
        <begin position="2352"/>
        <end position="2372"/>
    </location>
</feature>
<feature type="topological domain" description="Extracellular" evidence="5">
    <location>
        <begin position="2373"/>
        <end position="2394"/>
    </location>
</feature>
<feature type="transmembrane region" description="Helical" evidence="5">
    <location>
        <begin position="2395"/>
        <end position="2415"/>
    </location>
</feature>
<feature type="topological domain" description="Cytoplasmic" evidence="5">
    <location>
        <begin position="2416"/>
        <end position="2521"/>
    </location>
</feature>
<feature type="transmembrane region" description="Helical" evidence="5">
    <location>
        <begin position="2522"/>
        <end position="2542"/>
    </location>
</feature>
<feature type="topological domain" description="Extracellular" evidence="5">
    <location>
        <begin position="2543"/>
        <end position="2701"/>
    </location>
</feature>
<feature type="domain" description="MIR 1" evidence="6">
    <location>
        <begin position="112"/>
        <end position="166"/>
    </location>
</feature>
<feature type="domain" description="MIR 2" evidence="6">
    <location>
        <begin position="173"/>
        <end position="223"/>
    </location>
</feature>
<feature type="domain" description="MIR 3" evidence="6">
    <location>
        <begin position="231"/>
        <end position="287"/>
    </location>
</feature>
<feature type="domain" description="MIR 4" evidence="6">
    <location>
        <begin position="294"/>
        <end position="357"/>
    </location>
</feature>
<feature type="domain" description="MIR 5" evidence="6">
    <location>
        <begin position="378"/>
        <end position="434"/>
    </location>
</feature>
<feature type="region of interest" description="Disordered" evidence="7">
    <location>
        <begin position="1134"/>
        <end position="1174"/>
    </location>
</feature>
<feature type="region of interest" description="Disordered" evidence="7">
    <location>
        <begin position="2676"/>
        <end position="2701"/>
    </location>
</feature>
<feature type="binding site" evidence="2">
    <location>
        <position position="265"/>
    </location>
    <ligand>
        <name>1D-myo-inositol 1,4,5-trisphosphate</name>
        <dbReference type="ChEBI" id="CHEBI:203600"/>
    </ligand>
</feature>
<feature type="binding site" evidence="2">
    <location>
        <position position="267"/>
    </location>
    <ligand>
        <name>1D-myo-inositol 1,4,5-trisphosphate</name>
        <dbReference type="ChEBI" id="CHEBI:203600"/>
    </ligand>
</feature>
<feature type="binding site" evidence="2">
    <location>
        <position position="268"/>
    </location>
    <ligand>
        <name>1D-myo-inositol 1,4,5-trisphosphate</name>
        <dbReference type="ChEBI" id="CHEBI:203600"/>
    </ligand>
</feature>
<feature type="binding site" evidence="2">
    <location>
        <position position="269"/>
    </location>
    <ligand>
        <name>1D-myo-inositol 1,4,5-trisphosphate</name>
        <dbReference type="ChEBI" id="CHEBI:203600"/>
    </ligand>
</feature>
<feature type="binding site" evidence="2">
    <location>
        <position position="503"/>
    </location>
    <ligand>
        <name>1D-myo-inositol 1,4,5-trisphosphate</name>
        <dbReference type="ChEBI" id="CHEBI:203600"/>
    </ligand>
</feature>
<feature type="binding site" evidence="2">
    <location>
        <position position="507"/>
    </location>
    <ligand>
        <name>1D-myo-inositol 1,4,5-trisphosphate</name>
        <dbReference type="ChEBI" id="CHEBI:203600"/>
    </ligand>
</feature>
<feature type="binding site" evidence="2">
    <location>
        <position position="510"/>
    </location>
    <ligand>
        <name>1D-myo-inositol 1,4,5-trisphosphate</name>
        <dbReference type="ChEBI" id="CHEBI:203600"/>
    </ligand>
</feature>
<feature type="binding site" evidence="2">
    <location>
        <position position="567"/>
    </location>
    <ligand>
        <name>1D-myo-inositol 1,4,5-trisphosphate</name>
        <dbReference type="ChEBI" id="CHEBI:203600"/>
    </ligand>
</feature>
<feature type="binding site" evidence="2">
    <location>
        <position position="568"/>
    </location>
    <ligand>
        <name>1D-myo-inositol 1,4,5-trisphosphate</name>
        <dbReference type="ChEBI" id="CHEBI:203600"/>
    </ligand>
</feature>
<feature type="binding site" evidence="2">
    <location>
        <position position="569"/>
    </location>
    <ligand>
        <name>1D-myo-inositol 1,4,5-trisphosphate</name>
        <dbReference type="ChEBI" id="CHEBI:203600"/>
    </ligand>
</feature>
<feature type="binding site" evidence="2">
    <location>
        <position position="744"/>
    </location>
    <ligand>
        <name>Ca(2+)</name>
        <dbReference type="ChEBI" id="CHEBI:29108"/>
        <label>1</label>
        <note>low affinity</note>
    </ligand>
</feature>
<feature type="binding site" evidence="2">
    <location>
        <position position="1124"/>
    </location>
    <ligand>
        <name>Ca(2+)</name>
        <dbReference type="ChEBI" id="CHEBI:29108"/>
        <label>1</label>
        <note>low affinity</note>
    </ligand>
</feature>
<feature type="binding site" evidence="2">
    <location>
        <position position="1127"/>
    </location>
    <ligand>
        <name>Ca(2+)</name>
        <dbReference type="ChEBI" id="CHEBI:29108"/>
        <label>1</label>
        <note>low affinity</note>
    </ligand>
</feature>
<feature type="binding site" evidence="2">
    <location>
        <position position="1930"/>
    </location>
    <ligand>
        <name>Ca(2+)</name>
        <dbReference type="ChEBI" id="CHEBI:29108"/>
        <label>2</label>
        <note>high affinity</note>
    </ligand>
</feature>
<feature type="binding site" evidence="2">
    <location>
        <position position="1994"/>
    </location>
    <ligand>
        <name>Ca(2+)</name>
        <dbReference type="ChEBI" id="CHEBI:29108"/>
        <label>2</label>
        <note>high affinity</note>
    </ligand>
</feature>
<feature type="binding site" evidence="2">
    <location>
        <position position="2044"/>
    </location>
    <ligand>
        <name>ATP</name>
        <dbReference type="ChEBI" id="CHEBI:30616"/>
    </ligand>
</feature>
<feature type="binding site" evidence="2">
    <location>
        <position position="2177"/>
    </location>
    <ligand>
        <name>ATP</name>
        <dbReference type="ChEBI" id="CHEBI:30616"/>
    </ligand>
</feature>
<feature type="binding site" evidence="2">
    <location>
        <position position="2562"/>
    </location>
    <ligand>
        <name>ATP</name>
        <dbReference type="ChEBI" id="CHEBI:30616"/>
    </ligand>
</feature>
<feature type="binding site" evidence="2">
    <location>
        <position position="2562"/>
    </location>
    <ligand>
        <name>Zn(2+)</name>
        <dbReference type="ChEBI" id="CHEBI:29105"/>
    </ligand>
</feature>
<feature type="binding site" evidence="2">
    <location>
        <position position="2563"/>
    </location>
    <ligand>
        <name>ATP</name>
        <dbReference type="ChEBI" id="CHEBI:30616"/>
    </ligand>
</feature>
<feature type="binding site" evidence="2">
    <location>
        <position position="2565"/>
    </location>
    <ligand>
        <name>Zn(2+)</name>
        <dbReference type="ChEBI" id="CHEBI:29105"/>
    </ligand>
</feature>
<feature type="binding site" evidence="2">
    <location>
        <position position="2582"/>
    </location>
    <ligand>
        <name>Zn(2+)</name>
        <dbReference type="ChEBI" id="CHEBI:29105"/>
    </ligand>
</feature>
<feature type="binding site" evidence="2">
    <location>
        <position position="2584"/>
    </location>
    <ligand>
        <name>ATP</name>
        <dbReference type="ChEBI" id="CHEBI:30616"/>
    </ligand>
</feature>
<feature type="binding site" evidence="2">
    <location>
        <position position="2587"/>
    </location>
    <ligand>
        <name>ATP</name>
        <dbReference type="ChEBI" id="CHEBI:30616"/>
    </ligand>
</feature>
<feature type="binding site" evidence="2">
    <location>
        <position position="2587"/>
    </location>
    <ligand>
        <name>Zn(2+)</name>
        <dbReference type="ChEBI" id="CHEBI:29105"/>
    </ligand>
</feature>
<feature type="binding site" evidence="2">
    <location>
        <position position="2588"/>
    </location>
    <ligand>
        <name>ATP</name>
        <dbReference type="ChEBI" id="CHEBI:30616"/>
    </ligand>
</feature>
<feature type="binding site" evidence="2">
    <location>
        <position position="2589"/>
    </location>
    <ligand>
        <name>ATP</name>
        <dbReference type="ChEBI" id="CHEBI:30616"/>
    </ligand>
</feature>
<feature type="binding site" evidence="2">
    <location>
        <position position="2605"/>
    </location>
    <ligand>
        <name>Ca(2+)</name>
        <dbReference type="ChEBI" id="CHEBI:29108"/>
        <label>2</label>
        <note>high affinity</note>
    </ligand>
</feature>
<feature type="modified residue" description="Phosphoserine; by CaMK2" evidence="12">
    <location>
        <position position="150"/>
    </location>
</feature>
<feature type="modified residue" description="Phosphoserine; by PKA" evidence="4">
    <location>
        <position position="937"/>
    </location>
</feature>
<feature type="modified residue" description="Phosphoserine" evidence="1">
    <location>
        <position position="1160"/>
    </location>
</feature>
<feature type="modified residue" description="Phosphoserine" evidence="4">
    <location>
        <position position="1709"/>
    </location>
</feature>
<feature type="modified residue" description="Phosphotyrosine" evidence="5">
    <location>
        <position position="2607"/>
    </location>
</feature>
<feature type="modified residue" description="Phosphoserine" evidence="4">
    <location>
        <position position="2633"/>
    </location>
</feature>
<feature type="modified residue" description="Phosphoserine" evidence="4">
    <location>
        <position position="2636"/>
    </location>
</feature>
<feature type="sequence variant">
    <original>D</original>
    <variation>H</variation>
    <location>
        <position position="689"/>
    </location>
</feature>
<feature type="sequence variant">
    <original>G</original>
    <variation>C</variation>
    <location>
        <position position="1013"/>
    </location>
</feature>
<feature type="sequence variant">
    <original>L</original>
    <variation>P</variation>
    <location>
        <position position="1256"/>
    </location>
</feature>
<feature type="sequence variant">
    <original>V</original>
    <variation>I</variation>
    <location>
        <position position="2384"/>
    </location>
</feature>
<feature type="sequence variant">
    <original>E</original>
    <variation>V</variation>
    <location>
        <position position="2694"/>
    </location>
</feature>
<feature type="mutagenesis site" description="Loss of phosphorylation by CaMK2. Does not affect Inositol 1,4,5-trisphosphate-sensitive calcium-release channel activity." evidence="12">
    <original>S</original>
    <variation>A</variation>
    <location>
        <position position="150"/>
    </location>
</feature>
<feature type="mutagenesis site" description="Decreases Inositol 1,4,5-trisphosphate-sensitive calcium-release channel activity." evidence="12">
    <original>S</original>
    <variation>E</variation>
    <location>
        <position position="150"/>
    </location>
</feature>
<feature type="sequence conflict" description="In Ref. 2; AAK11622." evidence="14" ref="2">
    <original>K</original>
    <variation>N</variation>
    <location>
        <position position="119"/>
    </location>
</feature>
<feature type="sequence conflict" description="In Ref. 2; AAK11622." evidence="14" ref="2">
    <original>H</original>
    <variation>R</variation>
    <location>
        <position position="344"/>
    </location>
</feature>
<feature type="sequence conflict" description="In Ref. 2; AAK11622." evidence="14" ref="2">
    <original>W</original>
    <variation>V</variation>
    <location>
        <position position="943"/>
    </location>
</feature>
<feature type="sequence conflict" description="In Ref. 2; AAK11622." evidence="14" ref="2">
    <original>S</original>
    <variation>G</variation>
    <location>
        <position position="1692"/>
    </location>
</feature>
<feature type="sequence conflict" description="In Ref. 2; AAK11622." evidence="14" ref="2">
    <original>K</original>
    <variation>E</variation>
    <location>
        <position position="2556"/>
    </location>
</feature>
<dbReference type="EMBL" id="X61677">
    <property type="protein sequence ID" value="CAA43852.1"/>
    <property type="molecule type" value="mRNA"/>
</dbReference>
<dbReference type="EMBL" id="AF329470">
    <property type="protein sequence ID" value="AAK11622.1"/>
    <property type="molecule type" value="mRNA"/>
</dbReference>
<dbReference type="PIR" id="S17796">
    <property type="entry name" value="S17796"/>
</dbReference>
<dbReference type="RefSeq" id="NP_112308.1">
    <property type="nucleotide sequence ID" value="NM_031046.3"/>
</dbReference>
<dbReference type="SMR" id="P29995"/>
<dbReference type="BioGRID" id="249575">
    <property type="interactions" value="2"/>
</dbReference>
<dbReference type="FunCoup" id="P29995">
    <property type="interactions" value="1584"/>
</dbReference>
<dbReference type="IntAct" id="P29995">
    <property type="interactions" value="2"/>
</dbReference>
<dbReference type="STRING" id="10116.ENSRNOP00000047905"/>
<dbReference type="TCDB" id="1.A.3.2.1">
    <property type="family name" value="the ryanodine-inositol 1,4,5-triphosphate receptor ca(2+) channel (rir-cac) family"/>
</dbReference>
<dbReference type="iPTMnet" id="P29995"/>
<dbReference type="PhosphoSitePlus" id="P29995"/>
<dbReference type="jPOST" id="P29995"/>
<dbReference type="PaxDb" id="10116-ENSRNOP00000047905"/>
<dbReference type="GeneID" id="81678"/>
<dbReference type="KEGG" id="rno:81678"/>
<dbReference type="UCSC" id="RGD:69649">
    <property type="organism name" value="rat"/>
</dbReference>
<dbReference type="AGR" id="RGD:69649"/>
<dbReference type="CTD" id="3709"/>
<dbReference type="RGD" id="69649">
    <property type="gene designation" value="Itpr2"/>
</dbReference>
<dbReference type="eggNOG" id="KOG3533">
    <property type="taxonomic scope" value="Eukaryota"/>
</dbReference>
<dbReference type="InParanoid" id="P29995"/>
<dbReference type="PhylomeDB" id="P29995"/>
<dbReference type="Reactome" id="R-RNO-114508">
    <property type="pathway name" value="Effects of PIP2 hydrolysis"/>
</dbReference>
<dbReference type="Reactome" id="R-RNO-139853">
    <property type="pathway name" value="Elevation of cytosolic Ca2+ levels"/>
</dbReference>
<dbReference type="Reactome" id="R-RNO-381676">
    <property type="pathway name" value="Glucagon-like Peptide-1 (GLP1) regulates insulin secretion"/>
</dbReference>
<dbReference type="Reactome" id="R-RNO-5578775">
    <property type="pathway name" value="Ion homeostasis"/>
</dbReference>
<dbReference type="Reactome" id="R-RNO-983695">
    <property type="pathway name" value="Antigen activates B Cell Receptor (BCR) leading to generation of second messengers"/>
</dbReference>
<dbReference type="PRO" id="PR:P29995"/>
<dbReference type="Proteomes" id="UP000002494">
    <property type="component" value="Unplaced"/>
</dbReference>
<dbReference type="GO" id="GO:0030424">
    <property type="term" value="C:axon"/>
    <property type="evidence" value="ECO:0000314"/>
    <property type="project" value="RGD"/>
</dbReference>
<dbReference type="GO" id="GO:0005938">
    <property type="term" value="C:cell cortex"/>
    <property type="evidence" value="ECO:0000266"/>
    <property type="project" value="RGD"/>
</dbReference>
<dbReference type="GO" id="GO:0005737">
    <property type="term" value="C:cytoplasm"/>
    <property type="evidence" value="ECO:0000266"/>
    <property type="project" value="RGD"/>
</dbReference>
<dbReference type="GO" id="GO:0005783">
    <property type="term" value="C:endoplasmic reticulum"/>
    <property type="evidence" value="ECO:0000266"/>
    <property type="project" value="RGD"/>
</dbReference>
<dbReference type="GO" id="GO:0005789">
    <property type="term" value="C:endoplasmic reticulum membrane"/>
    <property type="evidence" value="ECO:0000314"/>
    <property type="project" value="RGD"/>
</dbReference>
<dbReference type="GO" id="GO:0005886">
    <property type="term" value="C:plasma membrane"/>
    <property type="evidence" value="ECO:0000266"/>
    <property type="project" value="RGD"/>
</dbReference>
<dbReference type="GO" id="GO:0043235">
    <property type="term" value="C:receptor complex"/>
    <property type="evidence" value="ECO:0000266"/>
    <property type="project" value="RGD"/>
</dbReference>
<dbReference type="GO" id="GO:0016529">
    <property type="term" value="C:sarcoplasmic reticulum"/>
    <property type="evidence" value="ECO:0000314"/>
    <property type="project" value="RGD"/>
</dbReference>
<dbReference type="GO" id="GO:0033017">
    <property type="term" value="C:sarcoplasmic reticulum membrane"/>
    <property type="evidence" value="ECO:0000266"/>
    <property type="project" value="RGD"/>
</dbReference>
<dbReference type="GO" id="GO:0030667">
    <property type="term" value="C:secretory granule membrane"/>
    <property type="evidence" value="ECO:0000318"/>
    <property type="project" value="GO_Central"/>
</dbReference>
<dbReference type="GO" id="GO:0030658">
    <property type="term" value="C:transport vesicle membrane"/>
    <property type="evidence" value="ECO:0007669"/>
    <property type="project" value="UniProtKB-SubCell"/>
</dbReference>
<dbReference type="GO" id="GO:0005524">
    <property type="term" value="F:ATP binding"/>
    <property type="evidence" value="ECO:0007669"/>
    <property type="project" value="UniProtKB-KW"/>
</dbReference>
<dbReference type="GO" id="GO:0005509">
    <property type="term" value="F:calcium ion binding"/>
    <property type="evidence" value="ECO:0000314"/>
    <property type="project" value="RGD"/>
</dbReference>
<dbReference type="GO" id="GO:0070679">
    <property type="term" value="F:inositol 1,4,5 trisphosphate binding"/>
    <property type="evidence" value="ECO:0000314"/>
    <property type="project" value="RGD"/>
</dbReference>
<dbReference type="GO" id="GO:0005220">
    <property type="term" value="F:inositol 1,4,5-trisphosphate-gated calcium channel activity"/>
    <property type="evidence" value="ECO:0000314"/>
    <property type="project" value="UniProtKB"/>
</dbReference>
<dbReference type="GO" id="GO:0015278">
    <property type="term" value="F:intracellularly gated calcium channel activity"/>
    <property type="evidence" value="ECO:0000266"/>
    <property type="project" value="RGD"/>
</dbReference>
<dbReference type="GO" id="GO:0035091">
    <property type="term" value="F:phosphatidylinositol binding"/>
    <property type="evidence" value="ECO:0000266"/>
    <property type="project" value="RGD"/>
</dbReference>
<dbReference type="GO" id="GO:0097110">
    <property type="term" value="F:scaffold protein binding"/>
    <property type="evidence" value="ECO:0000266"/>
    <property type="project" value="RGD"/>
</dbReference>
<dbReference type="GO" id="GO:0044325">
    <property type="term" value="F:transmembrane transporter binding"/>
    <property type="evidence" value="ECO:0000266"/>
    <property type="project" value="RGD"/>
</dbReference>
<dbReference type="GO" id="GO:0006816">
    <property type="term" value="P:calcium ion transport"/>
    <property type="evidence" value="ECO:0000266"/>
    <property type="project" value="RGD"/>
</dbReference>
<dbReference type="GO" id="GO:0071320">
    <property type="term" value="P:cellular response to cAMP"/>
    <property type="evidence" value="ECO:0000266"/>
    <property type="project" value="RGD"/>
</dbReference>
<dbReference type="GO" id="GO:0071361">
    <property type="term" value="P:cellular response to ethanol"/>
    <property type="evidence" value="ECO:0000266"/>
    <property type="project" value="RGD"/>
</dbReference>
<dbReference type="GO" id="GO:0071456">
    <property type="term" value="P:cellular response to hypoxia"/>
    <property type="evidence" value="ECO:0000270"/>
    <property type="project" value="RGD"/>
</dbReference>
<dbReference type="GO" id="GO:0051209">
    <property type="term" value="P:release of sequestered calcium ion into cytosol"/>
    <property type="evidence" value="ECO:0000315"/>
    <property type="project" value="BHF-UCL"/>
</dbReference>
<dbReference type="GO" id="GO:0001666">
    <property type="term" value="P:response to hypoxia"/>
    <property type="evidence" value="ECO:0000266"/>
    <property type="project" value="RGD"/>
</dbReference>
<dbReference type="CDD" id="cd23288">
    <property type="entry name" value="beta-trefoil_MIR_ITPR2"/>
    <property type="match status" value="1"/>
</dbReference>
<dbReference type="FunFam" id="2.80.10.50:FF:000002">
    <property type="entry name" value="Inositol 1,4,5-trisphosphate receptor type 2"/>
    <property type="match status" value="1"/>
</dbReference>
<dbReference type="FunFam" id="2.80.10.50:FF:000005">
    <property type="entry name" value="Inositol 1,4,5-trisphosphate receptor type 2"/>
    <property type="match status" value="1"/>
</dbReference>
<dbReference type="FunFam" id="1.25.10.30:FF:000001">
    <property type="entry name" value="Inositol 1,4,5-trisphosphate receptor, type 2"/>
    <property type="match status" value="1"/>
</dbReference>
<dbReference type="Gene3D" id="1.10.287.70">
    <property type="match status" value="1"/>
</dbReference>
<dbReference type="Gene3D" id="2.80.10.50">
    <property type="match status" value="2"/>
</dbReference>
<dbReference type="Gene3D" id="1.25.10.30">
    <property type="entry name" value="IP3 receptor type 1 binding core, RIH domain"/>
    <property type="match status" value="1"/>
</dbReference>
<dbReference type="InterPro" id="IPR016024">
    <property type="entry name" value="ARM-type_fold"/>
</dbReference>
<dbReference type="InterPro" id="IPR014821">
    <property type="entry name" value="Ins145_P3_rcpt"/>
</dbReference>
<dbReference type="InterPro" id="IPR000493">
    <property type="entry name" value="InsP3_rcpt"/>
</dbReference>
<dbReference type="InterPro" id="IPR005821">
    <property type="entry name" value="Ion_trans_dom"/>
</dbReference>
<dbReference type="InterPro" id="IPR036300">
    <property type="entry name" value="MIR_dom_sf"/>
</dbReference>
<dbReference type="InterPro" id="IPR016093">
    <property type="entry name" value="MIR_motif"/>
</dbReference>
<dbReference type="InterPro" id="IPR013662">
    <property type="entry name" value="RIH_assoc-dom"/>
</dbReference>
<dbReference type="InterPro" id="IPR000699">
    <property type="entry name" value="RIH_dom"/>
</dbReference>
<dbReference type="InterPro" id="IPR015925">
    <property type="entry name" value="Ryanodine_IP3_receptor"/>
</dbReference>
<dbReference type="InterPro" id="IPR035910">
    <property type="entry name" value="RyR/IP3R_RIH_dom_sf"/>
</dbReference>
<dbReference type="PANTHER" id="PTHR45816:SF3">
    <property type="entry name" value="INOSITOL 1,4,5-TRISPHOSPHATE RECEPTOR"/>
    <property type="match status" value="1"/>
</dbReference>
<dbReference type="PANTHER" id="PTHR45816">
    <property type="entry name" value="MIR DOMAIN-CONTAINING PROTEIN"/>
    <property type="match status" value="1"/>
</dbReference>
<dbReference type="Pfam" id="PF08709">
    <property type="entry name" value="Ins145_P3_rec"/>
    <property type="match status" value="1"/>
</dbReference>
<dbReference type="Pfam" id="PF00520">
    <property type="entry name" value="Ion_trans"/>
    <property type="match status" value="1"/>
</dbReference>
<dbReference type="Pfam" id="PF02815">
    <property type="entry name" value="MIR"/>
    <property type="match status" value="1"/>
</dbReference>
<dbReference type="Pfam" id="PF08454">
    <property type="entry name" value="RIH_assoc"/>
    <property type="match status" value="1"/>
</dbReference>
<dbReference type="Pfam" id="PF01365">
    <property type="entry name" value="RYDR_ITPR"/>
    <property type="match status" value="2"/>
</dbReference>
<dbReference type="PRINTS" id="PR00779">
    <property type="entry name" value="INSP3RECEPTR"/>
</dbReference>
<dbReference type="SMART" id="SM00472">
    <property type="entry name" value="MIR"/>
    <property type="match status" value="4"/>
</dbReference>
<dbReference type="SUPFAM" id="SSF48371">
    <property type="entry name" value="ARM repeat"/>
    <property type="match status" value="1"/>
</dbReference>
<dbReference type="SUPFAM" id="SSF100909">
    <property type="entry name" value="IP3 receptor type 1 binding core, domain 2"/>
    <property type="match status" value="2"/>
</dbReference>
<dbReference type="SUPFAM" id="SSF82109">
    <property type="entry name" value="MIR domain"/>
    <property type="match status" value="2"/>
</dbReference>
<dbReference type="PROSITE" id="PS50919">
    <property type="entry name" value="MIR"/>
    <property type="match status" value="5"/>
</dbReference>
<organism>
    <name type="scientific">Rattus norvegicus</name>
    <name type="common">Rat</name>
    <dbReference type="NCBI Taxonomy" id="10116"/>
    <lineage>
        <taxon>Eukaryota</taxon>
        <taxon>Metazoa</taxon>
        <taxon>Chordata</taxon>
        <taxon>Craniata</taxon>
        <taxon>Vertebrata</taxon>
        <taxon>Euteleostomi</taxon>
        <taxon>Mammalia</taxon>
        <taxon>Eutheria</taxon>
        <taxon>Euarchontoglires</taxon>
        <taxon>Glires</taxon>
        <taxon>Rodentia</taxon>
        <taxon>Myomorpha</taxon>
        <taxon>Muroidea</taxon>
        <taxon>Muridae</taxon>
        <taxon>Murinae</taxon>
        <taxon>Rattus</taxon>
    </lineage>
</organism>
<name>ITPR2_RAT</name>
<accession>P29995</accession>
<accession>Q99P56</accession>
<protein>
    <recommendedName>
        <fullName evidence="14">Inositol 1,4,5-trisphosphate-gated calcium channel ITPR2</fullName>
    </recommendedName>
    <alternativeName>
        <fullName>IP3 receptor isoform 2</fullName>
        <shortName>IP3R 2</shortName>
        <shortName>InsP3R2</shortName>
    </alternativeName>
    <alternativeName>
        <fullName>Inositol 1,4,5-trisphosphate receptor type 2</fullName>
    </alternativeName>
    <alternativeName>
        <fullName>Type 2 inositol 1,4,5-trisphosphate receptor</fullName>
        <shortName>Type 2 InsP3 receptor</shortName>
    </alternativeName>
</protein>
<sequence>MSDKMSSFLYIGDIVSLYAEGSVNGFISTLGLVDDRCVVHPEAGDLTNPPKKFRDCLFKVCPMNRYSAQKQYWKAKQAKQGNHTEAALLKKLQHAAELEQKQNESENRKLLGEIVKYSKVIQLLHIKSNKYLTVNKRLPALLEKNAMRVSLDAAGNEGSWFYIHPFWKLRSEGDNIVVGDKVVLMPVNAGQPLHASNVELLDNPGCKEVNAVNCNTSWKITLFMKFSSYREDVLKGGDVVRLFHAEQEKFLTCDDYEKKQHIFLRTTLRQSATSATSSKALWEIEVVHHDPCRGGAGQWNSLFRFKHLATGNYLAAELNPDYRDAQNEGKTVRDGELPTSKKKHQAGEKIMYTLVSVPHGNDIASLFELDATTLQRADCLVPRNSYVRLRHLCTNTWVTSTSIPIDTEEERPVMLKIGTCQTKEDKEAFAIVCVPLSEVRDLDFANDANKVLATTVKKLENGSITQNERRFVTKLLEDLIFFVADVTNNGQDVLDVVITKPNRERQKLMREQNILAQVFGILKAPFKEKAGEGSMLRLEDLGDQRYAPYKYVLRLCYRVLRHSQQDYRKNQEYIAKNFCVMQSQIGYDILAEDTITALLHNNRKLLEKHITAKEIETFVSLLRRNREPRFLDYLSDLCVSNSTAIPVTQELICKFMLSPGNADILIQTKLVSMQVENPMESSILPDDIDDEEVWLYWIDSNKEPHGKAIRHLAQEAREGTKADLEVLTYYRYQLNLFARMCLDRQYLAINQISTQLSVDLILRCVSDESLPFDLRASFCRLMLHMHVDRDPQESVVPVRYARLWTEIPTKITIHEYDSITDSSRNDMKRKFALTMEFVEEYLKEVVNQPFPFGDKEKNKLTFEVVHLARNLIYFGFYSFSELLRLTRTLLAILDIVQAPMSSYFERLSKFQDGSNNVMRTIHGVGEMMTQMVLSRGSIFPVSWPDAQPSVHPSKQASPGEQEDVTVMDTKLKVIEILQFILSVRLDYRISYMLSIYKKEFGENDGNGDPSASGTPETLLPSALVPDIDEIAAQAETMFAGRKEKTPVQLDDEGGRTFLRVLIHLIMHDYAPLLSGALQLLFKHFSQRAEVLQAFKQVQLLVSNQDVDNYKQIKADLDQLRLTVEKSELWVEKSGSYENGDMGEGQAKGGEEANEESNLLSPVQDGAKTPQIDSNKGNNYRIVKEILIRLSKLCVQNKKCRNQHQRLLKNMGAHSVVLDLLQIPYEKTDEKMNEVMDLAHTFLQNFCRGNPQNQVLLHKHLNLFLTPGLLEAETMRHIFMNNYHLCNEISERVVQHFVHCIETHGRHVEYLRFLQTIVKADGKYVKKCQDMVMTELINGGEDVLIFYNDRASFPILLNMMCSERARGDESGPLAYHITLVELLAACTEGKNVYTEIKCNSLLPLDDIVRVVTHDDCIPEVKIAYVNFVNHCYVDTEVEMKEIYTSNHIWKLFENFLVDMARVCNTTTDRKHADTFLERCVTESVMNIVSGFFNSPFSDNSTSLQTHQPVFIQLLQSAFRIYNCTWPNPAQKASVESCIRALAEVAKNRGIAIPVDLDSQVNTLFMKNHSSTVQRAAMGWRLSARSGPRFKEALGGPAWDYRNIIEKLQDVVASLEQQFSPMMQAEFSVLVDVLYSPELLFPEGSDARIRCGAFMSKLINHTKKLMEKEEKLCIKILQTLREMLEKKDSFMEESSTLRKILLNRYFKGDHSVGVNGPLSGAYAKTAQVGGGFTGQDADKTGISMSDIQCLLDKEGASELVIDVIVNTKNDRIFSEGILLGIALLEGGNTQTQNSFYQQLHEQKKSEKFFKVLYDRMKAAQKEIRSTVTVNTIDLGSKKREEDSDLMALGPRMRVRDSSLHLKEGMKGQLTEASSATSKAYCVYRREMDPDIDTMCPGQEAGSAEEKSAEEVTMSPAITIMRPILRFLQLLCENHNRELQNFLRNQNNKTNYNLVCETLQFLDCICGSTTGGLGLLGLYINEKNVALVNQTLESLTEYCQGPCHENQTCIATHESNGIDIIIALILSDINPLGKYRMDLVLQLKNNASKLLLAIMESRHDSENAERILFNMRPKELVDVMKNAYNQGLECNHGDEEGGDDGVSPKDVGHNIYILAHQLARHNKLLQQMLKPGSDPEEGDEALKYYANHTAQIEIVRHDRTMEQIVFPVPNICEFLTRESKYRVFNTTERDEQGSKVNDFFQQTEDLYNEMKWQKKIRNNPALFWFSRHISLWGSISFNLAVFINLAVALFYPFGDDGDEGTLSPLFSALLWVAVAICTSMLFFFSKPVGIRPFLVSIMLRSIYTIGLGPTLILLGAANLCNKIVFLVSFVGNRGTFTRGYRAVILDMAFLYHVAYVLVCMLGLFVHEFFYSFLLFDLVYREETLLNVIKSVTRNGRSIILTAVLALILVYLFSIIGFLFLKDDFTMEVDRLKNRTPVTGNDGVPTMTLTSMLGTCPKENCSPTIPSSNAAGEGGEDGIERTCDTLLMCIVTVLNQGLRNGGGVGDVLRRPSKDEPLFAARVVYDLLFFFIVIIIVLNLIFGVIIDTFADLRSEKQKKEKILKTTCFICGLERDKFDNKTVSFEEHIKSEHNMWHYLYFIVLVKVKDPTEYTGPESYVAQMITEKNLDWFPRMRAMSLVSNEGDSEQNEIRNLQEKLESTMSLVKQLSGQLAELKEQMTEQRKNKQRLGFLGSNTPHENHHMPPH</sequence>